<evidence type="ECO:0000255" key="1"/>
<evidence type="ECO:0000255" key="2">
    <source>
        <dbReference type="PROSITE-ProRule" id="PRU00498"/>
    </source>
</evidence>
<evidence type="ECO:0000255" key="3">
    <source>
        <dbReference type="PROSITE-ProRule" id="PRU01118"/>
    </source>
</evidence>
<evidence type="ECO:0000256" key="4">
    <source>
        <dbReference type="SAM" id="MobiDB-lite"/>
    </source>
</evidence>
<evidence type="ECO:0000305" key="5"/>
<evidence type="ECO:0000305" key="6">
    <source>
    </source>
</evidence>
<accession>D4AVW3</accession>
<feature type="signal peptide" evidence="1">
    <location>
        <begin position="1"/>
        <end position="35"/>
    </location>
</feature>
<feature type="chain" id="PRO_5003054455" description="LysM domain-containing protein ARB_00327">
    <location>
        <begin position="36"/>
        <end position="542"/>
    </location>
</feature>
<feature type="domain" description="LysM 1" evidence="3">
    <location>
        <begin position="264"/>
        <end position="310"/>
    </location>
</feature>
<feature type="domain" description="LysM 2" evidence="3">
    <location>
        <begin position="487"/>
        <end position="534"/>
    </location>
</feature>
<feature type="region of interest" description="Disordered" evidence="4">
    <location>
        <begin position="439"/>
        <end position="484"/>
    </location>
</feature>
<feature type="compositionally biased region" description="Low complexity" evidence="4">
    <location>
        <begin position="443"/>
        <end position="472"/>
    </location>
</feature>
<feature type="glycosylation site" description="N-linked (GlcNAc...) asparagine" evidence="2">
    <location>
        <position position="218"/>
    </location>
</feature>
<feature type="glycosylation site" description="N-linked (GlcNAc...) asparagine" evidence="2">
    <location>
        <position position="298"/>
    </location>
</feature>
<feature type="glycosylation site" description="N-linked (GlcNAc...) asparagine" evidence="2">
    <location>
        <position position="381"/>
    </location>
</feature>
<feature type="glycosylation site" description="N-linked (GlcNAc...) asparagine" evidence="2">
    <location>
        <position position="415"/>
    </location>
</feature>
<proteinExistence type="inferred from homology"/>
<dbReference type="EMBL" id="ABSU01000013">
    <property type="protein sequence ID" value="EFE32869.1"/>
    <property type="status" value="ALT_SEQ"/>
    <property type="molecule type" value="Genomic_DNA"/>
</dbReference>
<dbReference type="RefSeq" id="XP_003013509.1">
    <property type="nucleotide sequence ID" value="XM_003013463.1"/>
</dbReference>
<dbReference type="STRING" id="663331.D4AVW3"/>
<dbReference type="GeneID" id="9519626"/>
<dbReference type="KEGG" id="abe:ARB_00327"/>
<dbReference type="eggNOG" id="KOG2806">
    <property type="taxonomic scope" value="Eukaryota"/>
</dbReference>
<dbReference type="HOGENOM" id="CLU_1224486_0_0_1"/>
<dbReference type="OrthoDB" id="5985073at2759"/>
<dbReference type="Proteomes" id="UP000008866">
    <property type="component" value="Unassembled WGS sequence"/>
</dbReference>
<dbReference type="GO" id="GO:0005576">
    <property type="term" value="C:extracellular region"/>
    <property type="evidence" value="ECO:0007669"/>
    <property type="project" value="UniProtKB-SubCell"/>
</dbReference>
<dbReference type="GO" id="GO:0008061">
    <property type="term" value="F:chitin binding"/>
    <property type="evidence" value="ECO:0007669"/>
    <property type="project" value="UniProtKB-KW"/>
</dbReference>
<dbReference type="CDD" id="cd00118">
    <property type="entry name" value="LysM"/>
    <property type="match status" value="2"/>
</dbReference>
<dbReference type="Gene3D" id="3.10.350.10">
    <property type="entry name" value="LysM domain"/>
    <property type="match status" value="2"/>
</dbReference>
<dbReference type="InterPro" id="IPR052210">
    <property type="entry name" value="LysM1-like"/>
</dbReference>
<dbReference type="InterPro" id="IPR018392">
    <property type="entry name" value="LysM_dom"/>
</dbReference>
<dbReference type="InterPro" id="IPR036779">
    <property type="entry name" value="LysM_dom_sf"/>
</dbReference>
<dbReference type="PANTHER" id="PTHR34997">
    <property type="entry name" value="AM15"/>
    <property type="match status" value="1"/>
</dbReference>
<dbReference type="PANTHER" id="PTHR34997:SF1">
    <property type="entry name" value="PEPTIDOGLYCAN-BINDING LYSIN DOMAIN"/>
    <property type="match status" value="1"/>
</dbReference>
<dbReference type="Pfam" id="PF01476">
    <property type="entry name" value="LysM"/>
    <property type="match status" value="2"/>
</dbReference>
<dbReference type="SMART" id="SM00257">
    <property type="entry name" value="LysM"/>
    <property type="match status" value="2"/>
</dbReference>
<dbReference type="SUPFAM" id="SSF54106">
    <property type="entry name" value="LysM domain"/>
    <property type="match status" value="2"/>
</dbReference>
<dbReference type="PROSITE" id="PS51782">
    <property type="entry name" value="LYSM"/>
    <property type="match status" value="2"/>
</dbReference>
<protein>
    <recommendedName>
        <fullName evidence="5">LysM domain-containing protein ARB_00327</fullName>
    </recommendedName>
</protein>
<gene>
    <name type="ORF">ARB_00327</name>
</gene>
<comment type="function">
    <text evidence="6">Might have a role in sequestration of chitin oligosaccharides (breakdown products of fungal cell walls that are released during invasion and act as triggers of host immunity) to dampen host defense.</text>
</comment>
<comment type="subcellular location">
    <subcellularLocation>
        <location evidence="5">Secreted</location>
    </subcellularLocation>
</comment>
<comment type="domain">
    <text evidence="6">The LysM domains bind chitin and potentially related carbohydrates, and might be involved in damping host defense.</text>
</comment>
<comment type="sequence caution" evidence="5">
    <conflict type="erroneous gene model prediction">
        <sequence resource="EMBL-CDS" id="EFE32869"/>
    </conflict>
</comment>
<organism>
    <name type="scientific">Arthroderma benhamiae (strain ATCC MYA-4681 / CBS 112371)</name>
    <name type="common">Trichophyton mentagrophytes</name>
    <dbReference type="NCBI Taxonomy" id="663331"/>
    <lineage>
        <taxon>Eukaryota</taxon>
        <taxon>Fungi</taxon>
        <taxon>Dikarya</taxon>
        <taxon>Ascomycota</taxon>
        <taxon>Pezizomycotina</taxon>
        <taxon>Eurotiomycetes</taxon>
        <taxon>Eurotiomycetidae</taxon>
        <taxon>Onygenales</taxon>
        <taxon>Arthrodermataceae</taxon>
        <taxon>Trichophyton</taxon>
    </lineage>
</organism>
<name>LYSM5_ARTBC</name>
<reference key="1">
    <citation type="journal article" date="2011" name="Genome Biol.">
        <title>Comparative and functional genomics provide insights into the pathogenicity of dermatophytic fungi.</title>
        <authorList>
            <person name="Burmester A."/>
            <person name="Shelest E."/>
            <person name="Gloeckner G."/>
            <person name="Heddergott C."/>
            <person name="Schindler S."/>
            <person name="Staib P."/>
            <person name="Heidel A."/>
            <person name="Felder M."/>
            <person name="Petzold A."/>
            <person name="Szafranski K."/>
            <person name="Feuermann M."/>
            <person name="Pedruzzi I."/>
            <person name="Priebe S."/>
            <person name="Groth M."/>
            <person name="Winkler R."/>
            <person name="Li W."/>
            <person name="Kniemeyer O."/>
            <person name="Schroeckh V."/>
            <person name="Hertweck C."/>
            <person name="Hube B."/>
            <person name="White T.C."/>
            <person name="Platzer M."/>
            <person name="Guthke R."/>
            <person name="Heitman J."/>
            <person name="Woestemeyer J."/>
            <person name="Zipfel P.F."/>
            <person name="Monod M."/>
            <person name="Brakhage A.A."/>
        </authorList>
    </citation>
    <scope>NUCLEOTIDE SEQUENCE [LARGE SCALE GENOMIC DNA]</scope>
    <source>
        <strain>ATCC MYA-4681 / CBS 112371</strain>
    </source>
</reference>
<reference key="2">
    <citation type="journal article" date="2009" name="Trends Microbiol.">
        <title>Fungal LysM effectors: extinguishers of host immunity?</title>
        <authorList>
            <person name="de Jonge R."/>
            <person name="Thomma B.P."/>
        </authorList>
    </citation>
    <scope>DOMAIN</scope>
    <scope>FUNCTION PREDICTION</scope>
</reference>
<keyword id="KW-0147">Chitin-binding</keyword>
<keyword id="KW-0325">Glycoprotein</keyword>
<keyword id="KW-1185">Reference proteome</keyword>
<keyword id="KW-0677">Repeat</keyword>
<keyword id="KW-0964">Secreted</keyword>
<keyword id="KW-0732">Signal</keyword>
<keyword id="KW-0843">Virulence</keyword>
<sequence>MLSSVLFPAMRTLLLLKYVFSLISLSAICCQTVSAIPVVSREGLPMTLSDKCAEALISDVACDPNVLDFKPGYYYSPEILQRACTDTCKSALDSYLDRVKSSCGTETIVGPFDLEVSALIVPGMRKDLFQKTCLQDNGRYCNNVAATAAVIADPGVSRFNYLSSVPPGTVPPDPCDIQHVCLYVDDQSMRNIWATIDYYSYWVLYIINAGCYNMHRLNGTELCISAPGQKFVPGDATDLPGATVTTPVPAPSDAASGSNRYCGRWYGVKKGDYCNLIVLKFGITMDNFIFLNPALNSNCTNLYAEESYCVLPVGDINTYSGKPGYVSTPTGSETTATGIRFEDLPDATENPYPRPPPGPPIAEGTRDDCNYYFDGAEFQYNVTNTYWNSNCQIPPPQVYRVDPESFESWNAGLGNISRPECSFKPGFRYCGRYYALSDDSDEPTPTTPITTSDDPTSTSATPTTPTTSSKPSPGAPTMTGQPSACNKWHTVTNGESCTVIPKTFGITLEQFLAWNPTVKSDCTENFWAGYAYCVGVKTLGPS</sequence>